<sequence>MESWLFLLAILVVAWLGKNQSLQIATVVVLLIKLIPNTSKLLTTIGQKGINWGVTVITVAILIPIATGQIGFRDLWHAFKSPVGWIAVACGVLVSVLSFHGVGLLSATPEITVALVFGTIMGVVLLKGIAAGPIIAAGITYCIIQVLHLSLQ</sequence>
<accession>Q88VY3</accession>
<accession>F9UPM2</accession>
<reference key="1">
    <citation type="journal article" date="2003" name="Proc. Natl. Acad. Sci. U.S.A.">
        <title>Complete genome sequence of Lactobacillus plantarum WCFS1.</title>
        <authorList>
            <person name="Kleerebezem M."/>
            <person name="Boekhorst J."/>
            <person name="van Kranenburg R."/>
            <person name="Molenaar D."/>
            <person name="Kuipers O.P."/>
            <person name="Leer R."/>
            <person name="Tarchini R."/>
            <person name="Peters S.A."/>
            <person name="Sandbrink H.M."/>
            <person name="Fiers M.W.E.J."/>
            <person name="Stiekema W."/>
            <person name="Klein Lankhorst R.M."/>
            <person name="Bron P.A."/>
            <person name="Hoffer S.M."/>
            <person name="Nierop Groot M.N."/>
            <person name="Kerkhoven R."/>
            <person name="De Vries M."/>
            <person name="Ursing B."/>
            <person name="De Vos W.M."/>
            <person name="Siezen R.J."/>
        </authorList>
    </citation>
    <scope>NUCLEOTIDE SEQUENCE [LARGE SCALE GENOMIC DNA]</scope>
    <source>
        <strain>ATCC BAA-793 / NCIMB 8826 / WCFS1</strain>
    </source>
</reference>
<reference key="2">
    <citation type="journal article" date="2012" name="J. Bacteriol.">
        <title>Complete resequencing and reannotation of the Lactobacillus plantarum WCFS1 genome.</title>
        <authorList>
            <person name="Siezen R.J."/>
            <person name="Francke C."/>
            <person name="Renckens B."/>
            <person name="Boekhorst J."/>
            <person name="Wels M."/>
            <person name="Kleerebezem M."/>
            <person name="van Hijum S.A."/>
        </authorList>
    </citation>
    <scope>NUCLEOTIDE SEQUENCE [LARGE SCALE GENOMIC DNA]</scope>
    <scope>GENOME REANNOTATION</scope>
    <source>
        <strain>ATCC BAA-793 / NCIMB 8826 / WCFS1</strain>
    </source>
</reference>
<gene>
    <name type="ordered locus">lp_1894</name>
</gene>
<protein>
    <recommendedName>
        <fullName evidence="1">UPF0756 membrane protein lp_1894</fullName>
    </recommendedName>
</protein>
<feature type="chain" id="PRO_0000388895" description="UPF0756 membrane protein lp_1894">
    <location>
        <begin position="1"/>
        <end position="152"/>
    </location>
</feature>
<feature type="transmembrane region" description="Helical" evidence="1">
    <location>
        <begin position="25"/>
        <end position="45"/>
    </location>
</feature>
<feature type="transmembrane region" description="Helical" evidence="1">
    <location>
        <begin position="52"/>
        <end position="72"/>
    </location>
</feature>
<feature type="transmembrane region" description="Helical" evidence="1">
    <location>
        <begin position="85"/>
        <end position="105"/>
    </location>
</feature>
<feature type="transmembrane region" description="Helical" evidence="1">
    <location>
        <begin position="115"/>
        <end position="135"/>
    </location>
</feature>
<organism>
    <name type="scientific">Lactiplantibacillus plantarum (strain ATCC BAA-793 / NCIMB 8826 / WCFS1)</name>
    <name type="common">Lactobacillus plantarum</name>
    <dbReference type="NCBI Taxonomy" id="220668"/>
    <lineage>
        <taxon>Bacteria</taxon>
        <taxon>Bacillati</taxon>
        <taxon>Bacillota</taxon>
        <taxon>Bacilli</taxon>
        <taxon>Lactobacillales</taxon>
        <taxon>Lactobacillaceae</taxon>
        <taxon>Lactiplantibacillus</taxon>
    </lineage>
</organism>
<comment type="subcellular location">
    <subcellularLocation>
        <location evidence="1">Cell membrane</location>
        <topology evidence="1">Multi-pass membrane protein</topology>
    </subcellularLocation>
</comment>
<comment type="similarity">
    <text evidence="1">Belongs to the UPF0756 family.</text>
</comment>
<dbReference type="EMBL" id="AL935263">
    <property type="protein sequence ID" value="CCC79161.1"/>
    <property type="molecule type" value="Genomic_DNA"/>
</dbReference>
<dbReference type="RefSeq" id="WP_003640601.1">
    <property type="nucleotide sequence ID" value="NC_004567.2"/>
</dbReference>
<dbReference type="RefSeq" id="YP_004889675.1">
    <property type="nucleotide sequence ID" value="NC_004567.2"/>
</dbReference>
<dbReference type="STRING" id="220668.lp_1894"/>
<dbReference type="EnsemblBacteria" id="CCC79161">
    <property type="protein sequence ID" value="CCC79161"/>
    <property type="gene ID" value="lp_1894"/>
</dbReference>
<dbReference type="KEGG" id="lpl:lp_1894"/>
<dbReference type="PATRIC" id="fig|220668.9.peg.1597"/>
<dbReference type="eggNOG" id="COG2707">
    <property type="taxonomic scope" value="Bacteria"/>
</dbReference>
<dbReference type="HOGENOM" id="CLU_125889_1_0_9"/>
<dbReference type="OrthoDB" id="80306at2"/>
<dbReference type="PhylomeDB" id="Q88VY3"/>
<dbReference type="Proteomes" id="UP000000432">
    <property type="component" value="Chromosome"/>
</dbReference>
<dbReference type="GO" id="GO:0005886">
    <property type="term" value="C:plasma membrane"/>
    <property type="evidence" value="ECO:0007669"/>
    <property type="project" value="UniProtKB-SubCell"/>
</dbReference>
<dbReference type="HAMAP" id="MF_01874">
    <property type="entry name" value="UPF0756"/>
    <property type="match status" value="1"/>
</dbReference>
<dbReference type="InterPro" id="IPR007382">
    <property type="entry name" value="UPF0756_TM"/>
</dbReference>
<dbReference type="PANTHER" id="PTHR38452">
    <property type="entry name" value="UPF0756 MEMBRANE PROTEIN YEAL"/>
    <property type="match status" value="1"/>
</dbReference>
<dbReference type="PANTHER" id="PTHR38452:SF1">
    <property type="entry name" value="UPF0756 MEMBRANE PROTEIN YEAL"/>
    <property type="match status" value="1"/>
</dbReference>
<dbReference type="Pfam" id="PF04284">
    <property type="entry name" value="DUF441"/>
    <property type="match status" value="1"/>
</dbReference>
<keyword id="KW-1003">Cell membrane</keyword>
<keyword id="KW-0472">Membrane</keyword>
<keyword id="KW-1185">Reference proteome</keyword>
<keyword id="KW-0812">Transmembrane</keyword>
<keyword id="KW-1133">Transmembrane helix</keyword>
<name>Y1894_LACPL</name>
<proteinExistence type="inferred from homology"/>
<evidence type="ECO:0000255" key="1">
    <source>
        <dbReference type="HAMAP-Rule" id="MF_01874"/>
    </source>
</evidence>